<reference key="1">
    <citation type="journal article" date="2011" name="J. Bacteriol.">
        <title>Comparative genomics of 28 Salmonella enterica isolates: evidence for CRISPR-mediated adaptive sublineage evolution.</title>
        <authorList>
            <person name="Fricke W.F."/>
            <person name="Mammel M.K."/>
            <person name="McDermott P.F."/>
            <person name="Tartera C."/>
            <person name="White D.G."/>
            <person name="Leclerc J.E."/>
            <person name="Ravel J."/>
            <person name="Cebula T.A."/>
        </authorList>
    </citation>
    <scope>NUCLEOTIDE SEQUENCE [LARGE SCALE GENOMIC DNA]</scope>
    <source>
        <strain>CVM19633</strain>
    </source>
</reference>
<gene>
    <name evidence="1" type="primary">pncB</name>
    <name type="ordered locus">SeSA_A1118</name>
</gene>
<dbReference type="EC" id="6.3.4.21" evidence="1"/>
<dbReference type="EMBL" id="CP001127">
    <property type="protein sequence ID" value="ACF91416.1"/>
    <property type="molecule type" value="Genomic_DNA"/>
</dbReference>
<dbReference type="RefSeq" id="WP_000191405.1">
    <property type="nucleotide sequence ID" value="NC_011094.1"/>
</dbReference>
<dbReference type="SMR" id="B4TRW6"/>
<dbReference type="KEGG" id="sew:SeSA_A1118"/>
<dbReference type="HOGENOM" id="CLU_030991_1_0_6"/>
<dbReference type="UniPathway" id="UPA00253">
    <property type="reaction ID" value="UER00457"/>
</dbReference>
<dbReference type="Proteomes" id="UP000001865">
    <property type="component" value="Chromosome"/>
</dbReference>
<dbReference type="GO" id="GO:0005829">
    <property type="term" value="C:cytosol"/>
    <property type="evidence" value="ECO:0007669"/>
    <property type="project" value="TreeGrafter"/>
</dbReference>
<dbReference type="GO" id="GO:0004516">
    <property type="term" value="F:nicotinate phosphoribosyltransferase activity"/>
    <property type="evidence" value="ECO:0007669"/>
    <property type="project" value="UniProtKB-UniRule"/>
</dbReference>
<dbReference type="GO" id="GO:0034355">
    <property type="term" value="P:NAD biosynthetic process via the salvage pathway"/>
    <property type="evidence" value="ECO:0007669"/>
    <property type="project" value="TreeGrafter"/>
</dbReference>
<dbReference type="CDD" id="cd01401">
    <property type="entry name" value="PncB_like"/>
    <property type="match status" value="1"/>
</dbReference>
<dbReference type="FunFam" id="3.20.140.10:FF:000001">
    <property type="entry name" value="Nicotinate phosphoribosyltransferase"/>
    <property type="match status" value="1"/>
</dbReference>
<dbReference type="Gene3D" id="3.20.140.10">
    <property type="entry name" value="nicotinate phosphoribosyltransferase"/>
    <property type="match status" value="1"/>
</dbReference>
<dbReference type="HAMAP" id="MF_00570">
    <property type="entry name" value="NAPRTase"/>
    <property type="match status" value="1"/>
</dbReference>
<dbReference type="InterPro" id="IPR041525">
    <property type="entry name" value="N/Namide_PRibTrfase"/>
</dbReference>
<dbReference type="InterPro" id="IPR040727">
    <property type="entry name" value="NAPRTase_N"/>
</dbReference>
<dbReference type="InterPro" id="IPR006406">
    <property type="entry name" value="Nic_PRibTrfase"/>
</dbReference>
<dbReference type="InterPro" id="IPR007229">
    <property type="entry name" value="Nic_PRibTrfase-Fam"/>
</dbReference>
<dbReference type="InterPro" id="IPR036068">
    <property type="entry name" value="Nicotinate_pribotase-like_C"/>
</dbReference>
<dbReference type="NCBIfam" id="TIGR01514">
    <property type="entry name" value="NAPRTase"/>
    <property type="match status" value="1"/>
</dbReference>
<dbReference type="NCBIfam" id="NF003704">
    <property type="entry name" value="PRK05321.1"/>
    <property type="match status" value="1"/>
</dbReference>
<dbReference type="PANTHER" id="PTHR11098">
    <property type="entry name" value="NICOTINATE PHOSPHORIBOSYLTRANSFERASE"/>
    <property type="match status" value="1"/>
</dbReference>
<dbReference type="PANTHER" id="PTHR11098:SF1">
    <property type="entry name" value="NICOTINATE PHOSPHORIBOSYLTRANSFERASE"/>
    <property type="match status" value="1"/>
</dbReference>
<dbReference type="Pfam" id="PF04095">
    <property type="entry name" value="NAPRTase"/>
    <property type="match status" value="1"/>
</dbReference>
<dbReference type="Pfam" id="PF17767">
    <property type="entry name" value="NAPRTase_N"/>
    <property type="match status" value="1"/>
</dbReference>
<dbReference type="PIRSF" id="PIRSF000484">
    <property type="entry name" value="NAPRT"/>
    <property type="match status" value="1"/>
</dbReference>
<dbReference type="SUPFAM" id="SSF51690">
    <property type="entry name" value="Nicotinate/Quinolinate PRTase C-terminal domain-like"/>
    <property type="match status" value="1"/>
</dbReference>
<dbReference type="SUPFAM" id="SSF54675">
    <property type="entry name" value="Nicotinate/Quinolinate PRTase N-terminal domain-like"/>
    <property type="match status" value="1"/>
</dbReference>
<keyword id="KW-0436">Ligase</keyword>
<keyword id="KW-0597">Phosphoprotein</keyword>
<keyword id="KW-0662">Pyridine nucleotide biosynthesis</keyword>
<feature type="chain" id="PRO_1000129489" description="Nicotinate phosphoribosyltransferase">
    <location>
        <begin position="1"/>
        <end position="400"/>
    </location>
</feature>
<feature type="modified residue" description="Phosphohistidine; by autocatalysis" evidence="1">
    <location>
        <position position="220"/>
    </location>
</feature>
<name>PNCB_SALSV</name>
<accession>B4TRW6</accession>
<protein>
    <recommendedName>
        <fullName evidence="1">Nicotinate phosphoribosyltransferase</fullName>
        <shortName evidence="1">NAPRTase</shortName>
        <ecNumber evidence="1">6.3.4.21</ecNumber>
    </recommendedName>
</protein>
<proteinExistence type="inferred from homology"/>
<comment type="function">
    <text evidence="1">Catalyzes the synthesis of beta-nicotinate D-ribonucleotide from nicotinate and 5-phospho-D-ribose 1-phosphate at the expense of ATP.</text>
</comment>
<comment type="catalytic activity">
    <reaction evidence="1">
        <text>nicotinate + 5-phospho-alpha-D-ribose 1-diphosphate + ATP + H2O = nicotinate beta-D-ribonucleotide + ADP + phosphate + diphosphate</text>
        <dbReference type="Rhea" id="RHEA:36163"/>
        <dbReference type="ChEBI" id="CHEBI:15377"/>
        <dbReference type="ChEBI" id="CHEBI:30616"/>
        <dbReference type="ChEBI" id="CHEBI:32544"/>
        <dbReference type="ChEBI" id="CHEBI:33019"/>
        <dbReference type="ChEBI" id="CHEBI:43474"/>
        <dbReference type="ChEBI" id="CHEBI:57502"/>
        <dbReference type="ChEBI" id="CHEBI:58017"/>
        <dbReference type="ChEBI" id="CHEBI:456216"/>
        <dbReference type="EC" id="6.3.4.21"/>
    </reaction>
</comment>
<comment type="pathway">
    <text evidence="1">Cofactor biosynthesis; NAD(+) biosynthesis; nicotinate D-ribonucleotide from nicotinate: step 1/1.</text>
</comment>
<comment type="PTM">
    <text evidence="1">Transiently phosphorylated on a His residue during the reaction cycle. Phosphorylation strongly increases the affinity for substrates and increases the rate of nicotinate D-ribonucleotide production. Dephosphorylation regenerates the low-affinity form of the enzyme, leading to product release.</text>
</comment>
<comment type="similarity">
    <text evidence="1">Belongs to the NAPRTase family.</text>
</comment>
<organism>
    <name type="scientific">Salmonella schwarzengrund (strain CVM19633)</name>
    <dbReference type="NCBI Taxonomy" id="439843"/>
    <lineage>
        <taxon>Bacteria</taxon>
        <taxon>Pseudomonadati</taxon>
        <taxon>Pseudomonadota</taxon>
        <taxon>Gammaproteobacteria</taxon>
        <taxon>Enterobacterales</taxon>
        <taxon>Enterobacteriaceae</taxon>
        <taxon>Salmonella</taxon>
    </lineage>
</organism>
<evidence type="ECO:0000255" key="1">
    <source>
        <dbReference type="HAMAP-Rule" id="MF_00570"/>
    </source>
</evidence>
<sequence>MTQFASPVLHSLLDTDAYKLHMQQAVFHHYYDVQVAAEFRCRGDDLLGIYADAIREQVDAMQHLRLQEDEFQWLSGLPFFKPDYLNWLREFRYNPAQVCVTNDNGKLNIRLTGPWREVIMWEVPLLAVISELVHHYRSPNAGVDQALDALESKLVDFTALTANLDMSRFHLMDFGTRRRFSREVQQAIVKRLQQESWFVGTSNYDLARRLALTPMGTQAHEWFQAHQQISPDLATSQRAALAAWLNEYPDQLGIALTDCITMDAFLRDFGIEFASRYQGLRHDSGDPVAWGEKAIAHYEKLGIDPLTKTLVFSDNLDLQKAVELYRHFASRVQLSFGIGTRLTCDIPQVKPLNIVIKLVECNGKPVAKLSDSPGKTICHDKAFVRALRKAFDLPQIRKAS</sequence>